<feature type="chain" id="PRO_1000133174" description="Oxygen-dependent coproporphyrinogen-III oxidase">
    <location>
        <begin position="1"/>
        <end position="304"/>
    </location>
</feature>
<feature type="region of interest" description="Disordered" evidence="2">
    <location>
        <begin position="44"/>
        <end position="73"/>
    </location>
</feature>
<feature type="region of interest" description="Important for dimerization" evidence="1">
    <location>
        <begin position="269"/>
        <end position="304"/>
    </location>
</feature>
<feature type="compositionally biased region" description="Basic and acidic residues" evidence="2">
    <location>
        <begin position="56"/>
        <end position="65"/>
    </location>
</feature>
<feature type="active site" description="Proton donor" evidence="1">
    <location>
        <position position="131"/>
    </location>
</feature>
<feature type="binding site" evidence="1">
    <location>
        <position position="117"/>
    </location>
    <ligand>
        <name>substrate</name>
    </ligand>
</feature>
<feature type="binding site" evidence="1">
    <location>
        <position position="121"/>
    </location>
    <ligand>
        <name>a divalent metal cation</name>
        <dbReference type="ChEBI" id="CHEBI:60240"/>
    </ligand>
</feature>
<feature type="binding site" evidence="1">
    <location>
        <position position="131"/>
    </location>
    <ligand>
        <name>a divalent metal cation</name>
        <dbReference type="ChEBI" id="CHEBI:60240"/>
    </ligand>
</feature>
<feature type="binding site" evidence="1">
    <location>
        <begin position="133"/>
        <end position="135"/>
    </location>
    <ligand>
        <name>substrate</name>
    </ligand>
</feature>
<feature type="binding site" evidence="1">
    <location>
        <position position="169"/>
    </location>
    <ligand>
        <name>a divalent metal cation</name>
        <dbReference type="ChEBI" id="CHEBI:60240"/>
    </ligand>
</feature>
<feature type="binding site" evidence="1">
    <location>
        <position position="200"/>
    </location>
    <ligand>
        <name>a divalent metal cation</name>
        <dbReference type="ChEBI" id="CHEBI:60240"/>
    </ligand>
</feature>
<feature type="binding site" evidence="1">
    <location>
        <begin position="287"/>
        <end position="289"/>
    </location>
    <ligand>
        <name>substrate</name>
    </ligand>
</feature>
<feature type="site" description="Important for dimerization" evidence="1">
    <location>
        <position position="200"/>
    </location>
</feature>
<reference key="1">
    <citation type="journal article" date="2009" name="J. Bacteriol.">
        <title>Genome sequences of three Agrobacterium biovars help elucidate the evolution of multichromosome genomes in bacteria.</title>
        <authorList>
            <person name="Slater S.C."/>
            <person name="Goldman B.S."/>
            <person name="Goodner B."/>
            <person name="Setubal J.C."/>
            <person name="Farrand S.K."/>
            <person name="Nester E.W."/>
            <person name="Burr T.J."/>
            <person name="Banta L."/>
            <person name="Dickerman A.W."/>
            <person name="Paulsen I."/>
            <person name="Otten L."/>
            <person name="Suen G."/>
            <person name="Welch R."/>
            <person name="Almeida N.F."/>
            <person name="Arnold F."/>
            <person name="Burton O.T."/>
            <person name="Du Z."/>
            <person name="Ewing A."/>
            <person name="Godsy E."/>
            <person name="Heisel S."/>
            <person name="Houmiel K.L."/>
            <person name="Jhaveri J."/>
            <person name="Lu J."/>
            <person name="Miller N.M."/>
            <person name="Norton S."/>
            <person name="Chen Q."/>
            <person name="Phoolcharoen W."/>
            <person name="Ohlin V."/>
            <person name="Ondrusek D."/>
            <person name="Pride N."/>
            <person name="Stricklin S.L."/>
            <person name="Sun J."/>
            <person name="Wheeler C."/>
            <person name="Wilson L."/>
            <person name="Zhu H."/>
            <person name="Wood D.W."/>
        </authorList>
    </citation>
    <scope>NUCLEOTIDE SEQUENCE [LARGE SCALE GENOMIC DNA]</scope>
    <source>
        <strain>ATCC BAA-846 / DSM 112012 / S4</strain>
    </source>
</reference>
<gene>
    <name evidence="1" type="primary">hemF</name>
    <name type="ordered locus">Avi_3221</name>
</gene>
<evidence type="ECO:0000255" key="1">
    <source>
        <dbReference type="HAMAP-Rule" id="MF_00333"/>
    </source>
</evidence>
<evidence type="ECO:0000256" key="2">
    <source>
        <dbReference type="SAM" id="MobiDB-lite"/>
    </source>
</evidence>
<sequence>MQRPILPKGLPDDIEVKKATARAWFESLRDQICRSFEALEDELTGPLSDRAPGRFTPKDWQREEGLGGGGRMSMMNGRVFEKVGVHTSTVHGEFSPEFRKQMPGAEEDPRFWASGISLIAHSCNPHVPAVHMNTRMVVTTSQWFGGGADLTPVLDRRRTQDDADTVAFHAALEAACAAHPDVADYPHYKAWCEEYFFLPHRQEPRGIGGIFFDWLHAGEKFDLWAANFAFVQDVGRQFAAVYPDLVRRNFNTPWTEEDREEQLVRRGRYVEFNLLYDRGTIFGLKTGGNVESILSSLPPLVRWP</sequence>
<comment type="function">
    <text evidence="1">Involved in the heme biosynthesis. Catalyzes the aerobic oxidative decarboxylation of propionate groups of rings A and B of coproporphyrinogen-III to yield the vinyl groups in protoporphyrinogen-IX.</text>
</comment>
<comment type="catalytic activity">
    <reaction evidence="1">
        <text>coproporphyrinogen III + O2 + 2 H(+) = protoporphyrinogen IX + 2 CO2 + 2 H2O</text>
        <dbReference type="Rhea" id="RHEA:18257"/>
        <dbReference type="ChEBI" id="CHEBI:15377"/>
        <dbReference type="ChEBI" id="CHEBI:15378"/>
        <dbReference type="ChEBI" id="CHEBI:15379"/>
        <dbReference type="ChEBI" id="CHEBI:16526"/>
        <dbReference type="ChEBI" id="CHEBI:57307"/>
        <dbReference type="ChEBI" id="CHEBI:57309"/>
        <dbReference type="EC" id="1.3.3.3"/>
    </reaction>
</comment>
<comment type="cofactor">
    <cofactor evidence="1">
        <name>a divalent metal cation</name>
        <dbReference type="ChEBI" id="CHEBI:60240"/>
    </cofactor>
</comment>
<comment type="pathway">
    <text evidence="1">Porphyrin-containing compound metabolism; protoporphyrin-IX biosynthesis; protoporphyrinogen-IX from coproporphyrinogen-III (O2 route): step 1/1.</text>
</comment>
<comment type="subunit">
    <text evidence="1">Homodimer.</text>
</comment>
<comment type="subcellular location">
    <subcellularLocation>
        <location evidence="1">Cytoplasm</location>
    </subcellularLocation>
</comment>
<comment type="similarity">
    <text evidence="1">Belongs to the aerobic coproporphyrinogen-III oxidase family.</text>
</comment>
<proteinExistence type="inferred from homology"/>
<name>HEM6_ALLAM</name>
<keyword id="KW-0963">Cytoplasm</keyword>
<keyword id="KW-0350">Heme biosynthesis</keyword>
<keyword id="KW-0479">Metal-binding</keyword>
<keyword id="KW-0560">Oxidoreductase</keyword>
<keyword id="KW-0627">Porphyrin biosynthesis</keyword>
<keyword id="KW-1185">Reference proteome</keyword>
<protein>
    <recommendedName>
        <fullName evidence="1">Oxygen-dependent coproporphyrinogen-III oxidase</fullName>
        <shortName evidence="1">CPO</shortName>
        <shortName evidence="1">Coprogen oxidase</shortName>
        <shortName evidence="1">Coproporphyrinogenase</shortName>
        <ecNumber evidence="1">1.3.3.3</ecNumber>
    </recommendedName>
</protein>
<accession>B9JZ61</accession>
<dbReference type="EC" id="1.3.3.3" evidence="1"/>
<dbReference type="EMBL" id="CP000633">
    <property type="protein sequence ID" value="ACM37307.1"/>
    <property type="molecule type" value="Genomic_DNA"/>
</dbReference>
<dbReference type="RefSeq" id="WP_015916726.1">
    <property type="nucleotide sequence ID" value="NC_011989.1"/>
</dbReference>
<dbReference type="SMR" id="B9JZ61"/>
<dbReference type="STRING" id="311402.Avi_3221"/>
<dbReference type="KEGG" id="avi:Avi_3221"/>
<dbReference type="eggNOG" id="COG0408">
    <property type="taxonomic scope" value="Bacteria"/>
</dbReference>
<dbReference type="HOGENOM" id="CLU_026169_0_1_5"/>
<dbReference type="UniPathway" id="UPA00251">
    <property type="reaction ID" value="UER00322"/>
</dbReference>
<dbReference type="Proteomes" id="UP000001596">
    <property type="component" value="Chromosome 1"/>
</dbReference>
<dbReference type="GO" id="GO:0005737">
    <property type="term" value="C:cytoplasm"/>
    <property type="evidence" value="ECO:0007669"/>
    <property type="project" value="UniProtKB-SubCell"/>
</dbReference>
<dbReference type="GO" id="GO:0004109">
    <property type="term" value="F:coproporphyrinogen oxidase activity"/>
    <property type="evidence" value="ECO:0007669"/>
    <property type="project" value="UniProtKB-UniRule"/>
</dbReference>
<dbReference type="GO" id="GO:0046872">
    <property type="term" value="F:metal ion binding"/>
    <property type="evidence" value="ECO:0007669"/>
    <property type="project" value="UniProtKB-KW"/>
</dbReference>
<dbReference type="GO" id="GO:0042803">
    <property type="term" value="F:protein homodimerization activity"/>
    <property type="evidence" value="ECO:0000250"/>
    <property type="project" value="UniProtKB"/>
</dbReference>
<dbReference type="GO" id="GO:0006782">
    <property type="term" value="P:protoporphyrinogen IX biosynthetic process"/>
    <property type="evidence" value="ECO:0007669"/>
    <property type="project" value="UniProtKB-UniRule"/>
</dbReference>
<dbReference type="FunFam" id="3.40.1500.10:FF:000005">
    <property type="entry name" value="Oxygen-dependent coproporphyrinogen-III oxidase"/>
    <property type="match status" value="1"/>
</dbReference>
<dbReference type="Gene3D" id="3.40.1500.10">
    <property type="entry name" value="Coproporphyrinogen III oxidase, aerobic"/>
    <property type="match status" value="1"/>
</dbReference>
<dbReference type="HAMAP" id="MF_00333">
    <property type="entry name" value="Coprogen_oxidas"/>
    <property type="match status" value="1"/>
</dbReference>
<dbReference type="InterPro" id="IPR001260">
    <property type="entry name" value="Coprogen_oxidase_aer"/>
</dbReference>
<dbReference type="InterPro" id="IPR036406">
    <property type="entry name" value="Coprogen_oxidase_aer_sf"/>
</dbReference>
<dbReference type="InterPro" id="IPR018375">
    <property type="entry name" value="Coprogen_oxidase_CS"/>
</dbReference>
<dbReference type="NCBIfam" id="NF003727">
    <property type="entry name" value="PRK05330.1"/>
    <property type="match status" value="1"/>
</dbReference>
<dbReference type="PANTHER" id="PTHR10755">
    <property type="entry name" value="COPROPORPHYRINOGEN III OXIDASE, MITOCHONDRIAL"/>
    <property type="match status" value="1"/>
</dbReference>
<dbReference type="PANTHER" id="PTHR10755:SF0">
    <property type="entry name" value="OXYGEN-DEPENDENT COPROPORPHYRINOGEN-III OXIDASE, MITOCHONDRIAL"/>
    <property type="match status" value="1"/>
</dbReference>
<dbReference type="Pfam" id="PF01218">
    <property type="entry name" value="Coprogen_oxidas"/>
    <property type="match status" value="1"/>
</dbReference>
<dbReference type="PIRSF" id="PIRSF000166">
    <property type="entry name" value="Coproporphyri_ox"/>
    <property type="match status" value="1"/>
</dbReference>
<dbReference type="PRINTS" id="PR00073">
    <property type="entry name" value="COPRGNOXDASE"/>
</dbReference>
<dbReference type="SUPFAM" id="SSF102886">
    <property type="entry name" value="Coproporphyrinogen III oxidase"/>
    <property type="match status" value="1"/>
</dbReference>
<dbReference type="PROSITE" id="PS01021">
    <property type="entry name" value="COPROGEN_OXIDASE"/>
    <property type="match status" value="1"/>
</dbReference>
<organism>
    <name type="scientific">Allorhizobium ampelinum (strain ATCC BAA-846 / DSM 112012 / S4)</name>
    <name type="common">Agrobacterium vitis (strain S4)</name>
    <dbReference type="NCBI Taxonomy" id="311402"/>
    <lineage>
        <taxon>Bacteria</taxon>
        <taxon>Pseudomonadati</taxon>
        <taxon>Pseudomonadota</taxon>
        <taxon>Alphaproteobacteria</taxon>
        <taxon>Hyphomicrobiales</taxon>
        <taxon>Rhizobiaceae</taxon>
        <taxon>Rhizobium/Agrobacterium group</taxon>
        <taxon>Allorhizobium</taxon>
        <taxon>Allorhizobium ampelinum</taxon>
    </lineage>
</organism>